<proteinExistence type="evidence at protein level"/>
<gene>
    <name evidence="1" type="primary">nusG</name>
    <name type="ordered locus">b3982</name>
    <name type="ordered locus">JW3945</name>
</gene>
<protein>
    <recommendedName>
        <fullName evidence="1">Transcription termination/antitermination protein NusG</fullName>
    </recommendedName>
</protein>
<name>NUSG_ECOLI</name>
<keyword id="KW-0002">3D-structure</keyword>
<keyword id="KW-0903">Direct protein sequencing</keyword>
<keyword id="KW-1185">Reference proteome</keyword>
<keyword id="KW-0690">Ribosome biogenesis</keyword>
<keyword id="KW-0804">Transcription</keyword>
<keyword id="KW-0889">Transcription antitermination</keyword>
<keyword id="KW-0805">Transcription regulation</keyword>
<keyword id="KW-0806">Transcription termination</keyword>
<sequence length="181" mass="20532">MSEAPKKRWYVVQAFSGFEGRVATSLREHIKLHNMEDLFGEVMVPTEEVVEIRGGQRRKSERKFFPGYVLVQMVMNDASWHLVRSVPRVMGFIGGTSDRPAPISDKEVDAIMNRLQQVGDKPRPKTLFEPGEMVRVNDGPFADFNGVVEEVDYEKSRLKVSVSIFGRATPVELDFSQVEKA</sequence>
<evidence type="ECO:0000255" key="1">
    <source>
        <dbReference type="HAMAP-Rule" id="MF_00948"/>
    </source>
</evidence>
<evidence type="ECO:0000269" key="2">
    <source>
    </source>
</evidence>
<evidence type="ECO:0000269" key="3">
    <source>
    </source>
</evidence>
<evidence type="ECO:0000269" key="4">
    <source>
    </source>
</evidence>
<evidence type="ECO:0000269" key="5">
    <source>
    </source>
</evidence>
<evidence type="ECO:0000269" key="6">
    <source>
    </source>
</evidence>
<evidence type="ECO:0000269" key="7">
    <source>
    </source>
</evidence>
<evidence type="ECO:0000269" key="8">
    <source>
    </source>
</evidence>
<evidence type="ECO:0000269" key="9">
    <source>
    </source>
</evidence>
<evidence type="ECO:0000269" key="10">
    <source>
    </source>
</evidence>
<evidence type="ECO:0000269" key="11">
    <source>
    </source>
</evidence>
<evidence type="ECO:0000269" key="12">
    <source>
    </source>
</evidence>
<evidence type="ECO:0000269" key="13">
    <source>
    </source>
</evidence>
<evidence type="ECO:0007744" key="14">
    <source>
        <dbReference type="PDB" id="6TQN"/>
    </source>
</evidence>
<evidence type="ECO:0007744" key="15">
    <source>
        <dbReference type="PDB" id="6TQO"/>
    </source>
</evidence>
<evidence type="ECO:0007829" key="16">
    <source>
        <dbReference type="PDB" id="2JVV"/>
    </source>
</evidence>
<evidence type="ECO:0007829" key="17">
    <source>
        <dbReference type="PDB" id="9GUW"/>
    </source>
</evidence>
<evidence type="ECO:0007829" key="18">
    <source>
        <dbReference type="PDB" id="9GUX"/>
    </source>
</evidence>
<feature type="initiator methionine" description="Removed" evidence="13">
    <location>
        <position position="1"/>
    </location>
</feature>
<feature type="chain" id="PRO_0000113926" description="Transcription termination/antitermination protein NusG">
    <location>
        <begin position="2"/>
        <end position="181"/>
    </location>
</feature>
<feature type="domain" description="KOW" evidence="1">
    <location>
        <begin position="130"/>
        <end position="161"/>
    </location>
</feature>
<feature type="strand" evidence="17">
    <location>
        <begin position="9"/>
        <end position="13"/>
    </location>
</feature>
<feature type="helix" evidence="17">
    <location>
        <begin position="19"/>
        <end position="32"/>
    </location>
</feature>
<feature type="turn" evidence="17">
    <location>
        <begin position="36"/>
        <end position="38"/>
    </location>
</feature>
<feature type="strand" evidence="17">
    <location>
        <begin position="39"/>
        <end position="43"/>
    </location>
</feature>
<feature type="strand" evidence="18">
    <location>
        <begin position="65"/>
        <end position="67"/>
    </location>
</feature>
<feature type="strand" evidence="17">
    <location>
        <begin position="68"/>
        <end position="73"/>
    </location>
</feature>
<feature type="helix" evidence="17">
    <location>
        <begin position="77"/>
        <end position="84"/>
    </location>
</feature>
<feature type="strand" evidence="18">
    <location>
        <begin position="86"/>
        <end position="92"/>
    </location>
</feature>
<feature type="strand" evidence="17">
    <location>
        <begin position="97"/>
        <end position="99"/>
    </location>
</feature>
<feature type="helix" evidence="17">
    <location>
        <begin position="105"/>
        <end position="116"/>
    </location>
</feature>
<feature type="strand" evidence="17">
    <location>
        <begin position="133"/>
        <end position="135"/>
    </location>
</feature>
<feature type="strand" evidence="18">
    <location>
        <begin position="136"/>
        <end position="139"/>
    </location>
</feature>
<feature type="turn" evidence="17">
    <location>
        <begin position="140"/>
        <end position="143"/>
    </location>
</feature>
<feature type="strand" evidence="17">
    <location>
        <begin position="145"/>
        <end position="150"/>
    </location>
</feature>
<feature type="turn" evidence="17">
    <location>
        <begin position="153"/>
        <end position="156"/>
    </location>
</feature>
<feature type="strand" evidence="17">
    <location>
        <begin position="157"/>
        <end position="161"/>
    </location>
</feature>
<feature type="strand" evidence="17">
    <location>
        <begin position="165"/>
        <end position="167"/>
    </location>
</feature>
<feature type="strand" evidence="17">
    <location>
        <begin position="172"/>
        <end position="174"/>
    </location>
</feature>
<feature type="helix" evidence="17">
    <location>
        <begin position="175"/>
        <end position="177"/>
    </location>
</feature>
<feature type="strand" evidence="16">
    <location>
        <begin position="178"/>
        <end position="180"/>
    </location>
</feature>
<accession>P0AFG0</accession>
<accession>P16921</accession>
<accession>Q2M8R8</accession>
<organism>
    <name type="scientific">Escherichia coli (strain K12)</name>
    <dbReference type="NCBI Taxonomy" id="83333"/>
    <lineage>
        <taxon>Bacteria</taxon>
        <taxon>Pseudomonadati</taxon>
        <taxon>Pseudomonadota</taxon>
        <taxon>Gammaproteobacteria</taxon>
        <taxon>Enterobacterales</taxon>
        <taxon>Enterobacteriaceae</taxon>
        <taxon>Escherichia</taxon>
    </lineage>
</organism>
<comment type="function">
    <text evidence="1 2 3 4 5 6 8 9 10 11 12">Part of the processive rRNA transcription and antitermination complex (rrnTAC). The complex forms an RNA-chaperone ring around the RNA exit tunnel of RNA polymerase (RNAP). It supports rapid transcription and antitermination of rRNA operons, cotranscriptional rRNA folding, and annealing of distal rRNA regions to allow correct ribosome biogenesis (PubMed:32871103). Participates in transcription elongation, termination and antitermination. In the absence of Rho, increases the rate of transcription elongation by the RNAP, probably by partially suppressing pausing. In the presence of Rho, modulates most Rho-dependent termination events by interacting with the RNAP to render the complex more susceptible to the termination activity of Rho. May be required to overcome a kinetic limitation of Rho to function at certain terminators. Also involved in ribosomal RNA and phage lambda N-mediated transcriptional antitermination.</text>
</comment>
<comment type="subunit">
    <text evidence="1 3 5 7 8 12">Monomer. Interacts with the transcription termination factor Rho and with RNAP. One NusG monomer forms a stable complex with a Rho hexamer. Binds directly, but weakly, to the core enzyme of RNAP. Also interacts with RpsJ (NusE). The rRNA transcription and antitermination complex (rrnTAC) consists of RNAP, NusA, NusB, NusE (rpsJ), NusG, SubB, ribosomal protein S4, DNA and precursor rRNA; S4 is more flexible than other subunits (PubMed:32871103).</text>
</comment>
<comment type="interaction">
    <interactant intactId="EBI-369628">
        <id>P0AFG0</id>
    </interactant>
    <interactant intactId="EBI-547513">
        <id>P0ACJ8</id>
        <label>crp</label>
    </interactant>
    <organismsDiffer>false</organismsDiffer>
    <experiments>2</experiments>
</comment>
<comment type="interaction">
    <interactant intactId="EBI-369628">
        <id>P0AFG0</id>
    </interactant>
    <interactant intactId="EBI-545468">
        <id>P0AG30</id>
        <label>rho</label>
    </interactant>
    <organismsDiffer>false</organismsDiffer>
    <experiments>8</experiments>
</comment>
<comment type="domain">
    <text evidence="7">The N-terminal domain interacts with RNAP and the C-terminal domain binds either to Rho or to RpsJ (NusE). These domains are separated by a flexible linker.</text>
</comment>
<comment type="similarity">
    <text evidence="1">Belongs to the NusG family.</text>
</comment>
<dbReference type="EMBL" id="M30610">
    <property type="protein sequence ID" value="AAA24622.1"/>
    <property type="molecule type" value="Genomic_DNA"/>
</dbReference>
<dbReference type="EMBL" id="U00006">
    <property type="protein sequence ID" value="AAC43080.1"/>
    <property type="molecule type" value="Genomic_DNA"/>
</dbReference>
<dbReference type="EMBL" id="U00096">
    <property type="protein sequence ID" value="AAC76956.1"/>
    <property type="molecule type" value="Genomic_DNA"/>
</dbReference>
<dbReference type="EMBL" id="AP009048">
    <property type="protein sequence ID" value="BAE77338.1"/>
    <property type="molecule type" value="Genomic_DNA"/>
</dbReference>
<dbReference type="PIR" id="B35139">
    <property type="entry name" value="TWECNG"/>
</dbReference>
<dbReference type="RefSeq" id="NP_418409.1">
    <property type="nucleotide sequence ID" value="NC_000913.3"/>
</dbReference>
<dbReference type="RefSeq" id="WP_001287516.1">
    <property type="nucleotide sequence ID" value="NZ_STEB01000045.1"/>
</dbReference>
<dbReference type="PDB" id="2JVV">
    <property type="method" value="NMR"/>
    <property type="chains" value="A=1-181"/>
</dbReference>
<dbReference type="PDB" id="2K06">
    <property type="method" value="NMR"/>
    <property type="chains" value="A=1-123"/>
</dbReference>
<dbReference type="PDB" id="2KVQ">
    <property type="method" value="NMR"/>
    <property type="chains" value="G=123-181"/>
</dbReference>
<dbReference type="PDB" id="5MS0">
    <property type="method" value="EM"/>
    <property type="resolution" value="9.80 A"/>
    <property type="chains" value="F=1-181"/>
</dbReference>
<dbReference type="PDB" id="6C6U">
    <property type="method" value="EM"/>
    <property type="resolution" value="3.70 A"/>
    <property type="chains" value="N=1-181"/>
</dbReference>
<dbReference type="PDB" id="6DUQ">
    <property type="method" value="X-ray"/>
    <property type="resolution" value="3.70 A"/>
    <property type="chains" value="M/N/O/P/Q/R/S/T/U/V/W/X=125-181"/>
</dbReference>
<dbReference type="PDB" id="6GOV">
    <property type="method" value="EM"/>
    <property type="resolution" value="3.70 A"/>
    <property type="chains" value="G=1-181"/>
</dbReference>
<dbReference type="PDB" id="6TQN">
    <property type="method" value="EM"/>
    <property type="resolution" value="3.80 A"/>
    <property type="chains" value="G=1-181"/>
</dbReference>
<dbReference type="PDB" id="6TQO">
    <property type="method" value="EM"/>
    <property type="resolution" value="4.00 A"/>
    <property type="chains" value="G=1-181"/>
</dbReference>
<dbReference type="PDB" id="6VU3">
    <property type="method" value="EM"/>
    <property type="resolution" value="3.70 A"/>
    <property type="chains" value="AB=1-181"/>
</dbReference>
<dbReference type="PDB" id="6VYQ">
    <property type="method" value="EM"/>
    <property type="resolution" value="3.70 A"/>
    <property type="chains" value="AB=1-181"/>
</dbReference>
<dbReference type="PDB" id="6VYR">
    <property type="method" value="EM"/>
    <property type="resolution" value="3.80 A"/>
    <property type="chains" value="AB=1-181"/>
</dbReference>
<dbReference type="PDB" id="6VYS">
    <property type="method" value="EM"/>
    <property type="resolution" value="3.70 A"/>
    <property type="chains" value="AB=1-181"/>
</dbReference>
<dbReference type="PDB" id="6VYT">
    <property type="method" value="EM"/>
    <property type="resolution" value="14.00 A"/>
    <property type="chains" value="AB=1-181"/>
</dbReference>
<dbReference type="PDB" id="6VYU">
    <property type="method" value="EM"/>
    <property type="resolution" value="7.00 A"/>
    <property type="chains" value="AB=1-181"/>
</dbReference>
<dbReference type="PDB" id="6VYW">
    <property type="method" value="EM"/>
    <property type="resolution" value="7.00 A"/>
    <property type="chains" value="AB=1-181"/>
</dbReference>
<dbReference type="PDB" id="6VYX">
    <property type="method" value="EM"/>
    <property type="resolution" value="9.90 A"/>
    <property type="chains" value="AB=1-181"/>
</dbReference>
<dbReference type="PDB" id="6VYY">
    <property type="method" value="EM"/>
    <property type="resolution" value="9.90 A"/>
    <property type="chains" value="AB=1-181"/>
</dbReference>
<dbReference type="PDB" id="6VYZ">
    <property type="method" value="EM"/>
    <property type="resolution" value="9.90 A"/>
    <property type="chains" value="AB=1-181"/>
</dbReference>
<dbReference type="PDB" id="6VZ2">
    <property type="method" value="EM"/>
    <property type="resolution" value="10.00 A"/>
    <property type="chains" value="AB=1-181"/>
</dbReference>
<dbReference type="PDB" id="6VZ3">
    <property type="method" value="EM"/>
    <property type="resolution" value="8.90 A"/>
    <property type="chains" value="AB=6-117"/>
</dbReference>
<dbReference type="PDB" id="6VZ5">
    <property type="method" value="EM"/>
    <property type="resolution" value="8.90 A"/>
    <property type="chains" value="AB=1-181"/>
</dbReference>
<dbReference type="PDB" id="6VZ7">
    <property type="method" value="EM"/>
    <property type="resolution" value="7.00 A"/>
    <property type="chains" value="AB=6-117"/>
</dbReference>
<dbReference type="PDB" id="6X6T">
    <property type="method" value="EM"/>
    <property type="resolution" value="3.20 A"/>
    <property type="chains" value="AB=1-181"/>
</dbReference>
<dbReference type="PDB" id="6X7F">
    <property type="method" value="EM"/>
    <property type="resolution" value="3.50 A"/>
    <property type="chains" value="AB=1-181"/>
</dbReference>
<dbReference type="PDB" id="6X7K">
    <property type="method" value="EM"/>
    <property type="resolution" value="3.10 A"/>
    <property type="chains" value="AB=1-181"/>
</dbReference>
<dbReference type="PDB" id="6X9Q">
    <property type="method" value="EM"/>
    <property type="resolution" value="4.80 A"/>
    <property type="chains" value="AB=1-181"/>
</dbReference>
<dbReference type="PDB" id="6XAV">
    <property type="method" value="EM"/>
    <property type="resolution" value="7.70 A"/>
    <property type="chains" value="L=1-181"/>
</dbReference>
<dbReference type="PDB" id="6XDQ">
    <property type="method" value="EM"/>
    <property type="resolution" value="3.70 A"/>
    <property type="chains" value="AB=1-181"/>
</dbReference>
<dbReference type="PDB" id="6XDR">
    <property type="method" value="EM"/>
    <property type="resolution" value="4.70 A"/>
    <property type="chains" value="AB=1-181"/>
</dbReference>
<dbReference type="PDB" id="6XE0">
    <property type="method" value="EM"/>
    <property type="resolution" value="6.80 A"/>
    <property type="chains" value="V=1-181"/>
</dbReference>
<dbReference type="PDB" id="6XGF">
    <property type="method" value="EM"/>
    <property type="resolution" value="5.00 A"/>
    <property type="chains" value="AB=1-181"/>
</dbReference>
<dbReference type="PDB" id="6XII">
    <property type="method" value="EM"/>
    <property type="resolution" value="7.00 A"/>
    <property type="chains" value="AB=1-181"/>
</dbReference>
<dbReference type="PDB" id="6XIJ">
    <property type="method" value="EM"/>
    <property type="resolution" value="8.00 A"/>
    <property type="chains" value="AB=1-181"/>
</dbReference>
<dbReference type="PDB" id="6Z9P">
    <property type="method" value="EM"/>
    <property type="resolution" value="3.90 A"/>
    <property type="chains" value="G=1-181"/>
</dbReference>
<dbReference type="PDB" id="6Z9Q">
    <property type="method" value="EM"/>
    <property type="resolution" value="5.70 A"/>
    <property type="chains" value="G=1-181"/>
</dbReference>
<dbReference type="PDB" id="6Z9R">
    <property type="method" value="EM"/>
    <property type="resolution" value="4.10 A"/>
    <property type="chains" value="G=1-181"/>
</dbReference>
<dbReference type="PDB" id="6ZTJ">
    <property type="method" value="EM"/>
    <property type="resolution" value="3.40 A"/>
    <property type="chains" value="CF=1-181"/>
</dbReference>
<dbReference type="PDB" id="6ZTL">
    <property type="method" value="EM"/>
    <property type="resolution" value="3.50 A"/>
    <property type="chains" value="CF=1-181"/>
</dbReference>
<dbReference type="PDB" id="6ZTN">
    <property type="method" value="EM"/>
    <property type="resolution" value="3.90 A"/>
    <property type="chains" value="CF=1-181"/>
</dbReference>
<dbReference type="PDB" id="7PY0">
    <property type="method" value="EM"/>
    <property type="resolution" value="4.50 A"/>
    <property type="chains" value="G=1-181"/>
</dbReference>
<dbReference type="PDB" id="7PY1">
    <property type="method" value="EM"/>
    <property type="resolution" value="3.80 A"/>
    <property type="chains" value="G=1-181"/>
</dbReference>
<dbReference type="PDB" id="7PY5">
    <property type="method" value="EM"/>
    <property type="resolution" value="3.90 A"/>
    <property type="chains" value="G=1-181"/>
</dbReference>
<dbReference type="PDB" id="7PY6">
    <property type="method" value="EM"/>
    <property type="resolution" value="4.10 A"/>
    <property type="chains" value="G=1-181"/>
</dbReference>
<dbReference type="PDB" id="7PY7">
    <property type="method" value="EM"/>
    <property type="resolution" value="4.10 A"/>
    <property type="chains" value="G=1-181"/>
</dbReference>
<dbReference type="PDB" id="7PY8">
    <property type="method" value="EM"/>
    <property type="resolution" value="3.80 A"/>
    <property type="chains" value="G=1-181"/>
</dbReference>
<dbReference type="PDB" id="8E3F">
    <property type="method" value="EM"/>
    <property type="resolution" value="6.50 A"/>
    <property type="chains" value="F=1-181"/>
</dbReference>
<dbReference type="PDB" id="8E5K">
    <property type="method" value="EM"/>
    <property type="resolution" value="4.20 A"/>
    <property type="chains" value="F=1-181"/>
</dbReference>
<dbReference type="PDB" id="8E5O">
    <property type="method" value="EM"/>
    <property type="resolution" value="4.40 A"/>
    <property type="chains" value="F=1-181"/>
</dbReference>
<dbReference type="PDB" id="8E6X">
    <property type="method" value="EM"/>
    <property type="resolution" value="4.27 A"/>
    <property type="chains" value="F=1-181"/>
</dbReference>
<dbReference type="PDB" id="8E6Z">
    <property type="method" value="EM"/>
    <property type="resolution" value="4.10 A"/>
    <property type="chains" value="F=1-181"/>
</dbReference>
<dbReference type="PDB" id="8E79">
    <property type="method" value="EM"/>
    <property type="resolution" value="3.71 A"/>
    <property type="chains" value="N=1-181"/>
</dbReference>
<dbReference type="PDB" id="8G2U">
    <property type="method" value="EM"/>
    <property type="resolution" value="3.00 A"/>
    <property type="chains" value="u=123-181"/>
</dbReference>
<dbReference type="PDB" id="8G31">
    <property type="method" value="EM"/>
    <property type="resolution" value="3.20 A"/>
    <property type="chains" value="u=123-181"/>
</dbReference>
<dbReference type="PDB" id="8G34">
    <property type="method" value="EM"/>
    <property type="resolution" value="3.20 A"/>
    <property type="chains" value="u=123-181"/>
</dbReference>
<dbReference type="PDB" id="8G38">
    <property type="method" value="EM"/>
    <property type="resolution" value="3.20 A"/>
    <property type="chains" value="u=123-181"/>
</dbReference>
<dbReference type="PDB" id="8T5D">
    <property type="method" value="EM"/>
    <property type="resolution" value="3.20 A"/>
    <property type="chains" value="u=123-181"/>
</dbReference>
<dbReference type="PDB" id="8T5H">
    <property type="method" value="EM"/>
    <property type="resolution" value="3.30 A"/>
    <property type="chains" value="u=123-181"/>
</dbReference>
<dbReference type="PDB" id="9GUR">
    <property type="method" value="EM"/>
    <property type="resolution" value="4.20 A"/>
    <property type="chains" value="Z=6-118"/>
</dbReference>
<dbReference type="PDB" id="9GUW">
    <property type="method" value="EM"/>
    <property type="resolution" value="3.10 A"/>
    <property type="chains" value="Z=1-181"/>
</dbReference>
<dbReference type="PDB" id="9GUX">
    <property type="method" value="EM"/>
    <property type="resolution" value="3.30 A"/>
    <property type="chains" value="Z=1-180"/>
</dbReference>
<dbReference type="PDBsum" id="2JVV"/>
<dbReference type="PDBsum" id="2K06"/>
<dbReference type="PDBsum" id="2KVQ"/>
<dbReference type="PDBsum" id="5MS0"/>
<dbReference type="PDBsum" id="6C6U"/>
<dbReference type="PDBsum" id="6DUQ"/>
<dbReference type="PDBsum" id="6GOV"/>
<dbReference type="PDBsum" id="6TQN"/>
<dbReference type="PDBsum" id="6TQO"/>
<dbReference type="PDBsum" id="6VU3"/>
<dbReference type="PDBsum" id="6VYQ"/>
<dbReference type="PDBsum" id="6VYR"/>
<dbReference type="PDBsum" id="6VYS"/>
<dbReference type="PDBsum" id="6VYT"/>
<dbReference type="PDBsum" id="6VYU"/>
<dbReference type="PDBsum" id="6VYW"/>
<dbReference type="PDBsum" id="6VYX"/>
<dbReference type="PDBsum" id="6VYY"/>
<dbReference type="PDBsum" id="6VYZ"/>
<dbReference type="PDBsum" id="6VZ2"/>
<dbReference type="PDBsum" id="6VZ3"/>
<dbReference type="PDBsum" id="6VZ5"/>
<dbReference type="PDBsum" id="6VZ7"/>
<dbReference type="PDBsum" id="6X6T"/>
<dbReference type="PDBsum" id="6X7F"/>
<dbReference type="PDBsum" id="6X7K"/>
<dbReference type="PDBsum" id="6X9Q"/>
<dbReference type="PDBsum" id="6XAV"/>
<dbReference type="PDBsum" id="6XDQ"/>
<dbReference type="PDBsum" id="6XDR"/>
<dbReference type="PDBsum" id="6XE0"/>
<dbReference type="PDBsum" id="6XGF"/>
<dbReference type="PDBsum" id="6XII"/>
<dbReference type="PDBsum" id="6XIJ"/>
<dbReference type="PDBsum" id="6Z9P"/>
<dbReference type="PDBsum" id="6Z9Q"/>
<dbReference type="PDBsum" id="6Z9R"/>
<dbReference type="PDBsum" id="6ZTJ"/>
<dbReference type="PDBsum" id="6ZTL"/>
<dbReference type="PDBsum" id="6ZTN"/>
<dbReference type="PDBsum" id="7PY0"/>
<dbReference type="PDBsum" id="7PY1"/>
<dbReference type="PDBsum" id="7PY5"/>
<dbReference type="PDBsum" id="7PY6"/>
<dbReference type="PDBsum" id="7PY7"/>
<dbReference type="PDBsum" id="7PY8"/>
<dbReference type="PDBsum" id="8E3F"/>
<dbReference type="PDBsum" id="8E5K"/>
<dbReference type="PDBsum" id="8E5O"/>
<dbReference type="PDBsum" id="8E6X"/>
<dbReference type="PDBsum" id="8E6Z"/>
<dbReference type="PDBsum" id="8E79"/>
<dbReference type="PDBsum" id="8G2U"/>
<dbReference type="PDBsum" id="8G31"/>
<dbReference type="PDBsum" id="8G34"/>
<dbReference type="PDBsum" id="8G38"/>
<dbReference type="PDBsum" id="8T5D"/>
<dbReference type="PDBsum" id="8T5H"/>
<dbReference type="PDBsum" id="9GUR"/>
<dbReference type="PDBsum" id="9GUW"/>
<dbReference type="PDBsum" id="9GUX"/>
<dbReference type="BMRB" id="P0AFG0"/>
<dbReference type="EMDB" id="EMD-13706"/>
<dbReference type="EMDB" id="EMD-13707"/>
<dbReference type="EMDB" id="EMD-13713"/>
<dbReference type="EMDB" id="EMD-13714"/>
<dbReference type="EMDB" id="EMD-13715"/>
<dbReference type="EMDB" id="EMD-13716"/>
<dbReference type="EMDB" id="EMD-22115"/>
<dbReference type="EMDB" id="EMD-22143"/>
<dbReference type="EMDB" id="EMD-3561"/>
<dbReference type="EMDB" id="EMD-51617"/>
<dbReference type="EMDB" id="EMD-51622"/>
<dbReference type="EMDB" id="EMD-51623"/>
<dbReference type="SMR" id="P0AFG0"/>
<dbReference type="BioGRID" id="4259510">
    <property type="interactions" value="29"/>
</dbReference>
<dbReference type="BioGRID" id="852779">
    <property type="interactions" value="4"/>
</dbReference>
<dbReference type="ComplexPortal" id="CPX-5674">
    <property type="entry name" value="Transcription elongation complex"/>
</dbReference>
<dbReference type="ComplexPortal" id="CPX-5780">
    <property type="entry name" value="lambdaN-dependent processive transcription antitermination complex"/>
</dbReference>
<dbReference type="DIP" id="DIP-31860N"/>
<dbReference type="FunCoup" id="P0AFG0">
    <property type="interactions" value="724"/>
</dbReference>
<dbReference type="IntAct" id="P0AFG0">
    <property type="interactions" value="61"/>
</dbReference>
<dbReference type="MINT" id="P0AFG0"/>
<dbReference type="STRING" id="511145.b3982"/>
<dbReference type="jPOST" id="P0AFG0"/>
<dbReference type="PaxDb" id="511145-b3982"/>
<dbReference type="EnsemblBacteria" id="AAC76956">
    <property type="protein sequence ID" value="AAC76956"/>
    <property type="gene ID" value="b3982"/>
</dbReference>
<dbReference type="GeneID" id="93777912"/>
<dbReference type="GeneID" id="948485"/>
<dbReference type="KEGG" id="ecj:JW3945"/>
<dbReference type="KEGG" id="eco:b3982"/>
<dbReference type="KEGG" id="ecoc:C3026_21510"/>
<dbReference type="PATRIC" id="fig|1411691.4.peg.2730"/>
<dbReference type="EchoBASE" id="EB0661"/>
<dbReference type="eggNOG" id="COG0250">
    <property type="taxonomic scope" value="Bacteria"/>
</dbReference>
<dbReference type="HOGENOM" id="CLU_067287_1_0_6"/>
<dbReference type="InParanoid" id="P0AFG0"/>
<dbReference type="OMA" id="EWYVIHT"/>
<dbReference type="OrthoDB" id="9809075at2"/>
<dbReference type="PhylomeDB" id="P0AFG0"/>
<dbReference type="BioCyc" id="EcoCyc:EG10667-MONOMER"/>
<dbReference type="EvolutionaryTrace" id="P0AFG0"/>
<dbReference type="PRO" id="PR:P0AFG0"/>
<dbReference type="Proteomes" id="UP000000625">
    <property type="component" value="Chromosome"/>
</dbReference>
<dbReference type="GO" id="GO:0005829">
    <property type="term" value="C:cytosol"/>
    <property type="evidence" value="ECO:0000314"/>
    <property type="project" value="EcoCyc"/>
</dbReference>
<dbReference type="GO" id="GO:0008023">
    <property type="term" value="C:transcription elongation factor complex"/>
    <property type="evidence" value="ECO:0000303"/>
    <property type="project" value="ComplexPortal"/>
</dbReference>
<dbReference type="GO" id="GO:0006353">
    <property type="term" value="P:DNA-templated transcription termination"/>
    <property type="evidence" value="ECO:0000314"/>
    <property type="project" value="EcoCyc"/>
</dbReference>
<dbReference type="GO" id="GO:0032784">
    <property type="term" value="P:regulation of DNA-templated transcription elongation"/>
    <property type="evidence" value="ECO:0000303"/>
    <property type="project" value="ComplexPortal"/>
</dbReference>
<dbReference type="GO" id="GO:0042254">
    <property type="term" value="P:ribosome biogenesis"/>
    <property type="evidence" value="ECO:0007669"/>
    <property type="project" value="UniProtKB-KW"/>
</dbReference>
<dbReference type="GO" id="GO:0031564">
    <property type="term" value="P:transcription antitermination"/>
    <property type="evidence" value="ECO:0000314"/>
    <property type="project" value="EcoCyc"/>
</dbReference>
<dbReference type="GO" id="GO:0140673">
    <property type="term" value="P:transcription elongation-coupled chromatin remodeling"/>
    <property type="evidence" value="ECO:0007669"/>
    <property type="project" value="InterPro"/>
</dbReference>
<dbReference type="CDD" id="cd06091">
    <property type="entry name" value="KOW_NusG"/>
    <property type="match status" value="1"/>
</dbReference>
<dbReference type="CDD" id="cd09891">
    <property type="entry name" value="NGN_Bact_1"/>
    <property type="match status" value="1"/>
</dbReference>
<dbReference type="DisProt" id="DP01496"/>
<dbReference type="FunFam" id="2.30.30.30:FF:000002">
    <property type="entry name" value="Transcription termination/antitermination factor NusG"/>
    <property type="match status" value="1"/>
</dbReference>
<dbReference type="FunFam" id="3.30.70.940:FF:000001">
    <property type="entry name" value="Transcription termination/antitermination protein NusG"/>
    <property type="match status" value="1"/>
</dbReference>
<dbReference type="Gene3D" id="2.30.30.30">
    <property type="match status" value="1"/>
</dbReference>
<dbReference type="Gene3D" id="3.30.70.940">
    <property type="entry name" value="NusG, N-terminal domain"/>
    <property type="match status" value="1"/>
</dbReference>
<dbReference type="HAMAP" id="MF_00948">
    <property type="entry name" value="NusG"/>
    <property type="match status" value="1"/>
</dbReference>
<dbReference type="InterPro" id="IPR005824">
    <property type="entry name" value="KOW"/>
</dbReference>
<dbReference type="InterPro" id="IPR047050">
    <property type="entry name" value="NGN"/>
</dbReference>
<dbReference type="InterPro" id="IPR006645">
    <property type="entry name" value="NGN-like_dom"/>
</dbReference>
<dbReference type="InterPro" id="IPR036735">
    <property type="entry name" value="NGN_dom_sf"/>
</dbReference>
<dbReference type="InterPro" id="IPR043425">
    <property type="entry name" value="NusG-like"/>
</dbReference>
<dbReference type="InterPro" id="IPR014722">
    <property type="entry name" value="Rib_uL2_dom2"/>
</dbReference>
<dbReference type="InterPro" id="IPR001062">
    <property type="entry name" value="Transcrpt_antiterm_NusG"/>
</dbReference>
<dbReference type="InterPro" id="IPR015869">
    <property type="entry name" value="Transcrpt_antiterm_NusG_bac_CS"/>
</dbReference>
<dbReference type="InterPro" id="IPR008991">
    <property type="entry name" value="Translation_prot_SH3-like_sf"/>
</dbReference>
<dbReference type="NCBIfam" id="TIGR00922">
    <property type="entry name" value="nusG"/>
    <property type="match status" value="1"/>
</dbReference>
<dbReference type="PANTHER" id="PTHR30265">
    <property type="entry name" value="RHO-INTERACTING TRANSCRIPTION TERMINATION FACTOR NUSG"/>
    <property type="match status" value="1"/>
</dbReference>
<dbReference type="PANTHER" id="PTHR30265:SF2">
    <property type="entry name" value="TRANSCRIPTION TERMINATION_ANTITERMINATION PROTEIN NUSG"/>
    <property type="match status" value="1"/>
</dbReference>
<dbReference type="Pfam" id="PF00467">
    <property type="entry name" value="KOW"/>
    <property type="match status" value="1"/>
</dbReference>
<dbReference type="Pfam" id="PF02357">
    <property type="entry name" value="NusG"/>
    <property type="match status" value="1"/>
</dbReference>
<dbReference type="PRINTS" id="PR00338">
    <property type="entry name" value="NUSGTNSCPFCT"/>
</dbReference>
<dbReference type="SMART" id="SM00739">
    <property type="entry name" value="KOW"/>
    <property type="match status" value="1"/>
</dbReference>
<dbReference type="SMART" id="SM00738">
    <property type="entry name" value="NGN"/>
    <property type="match status" value="1"/>
</dbReference>
<dbReference type="SUPFAM" id="SSF82679">
    <property type="entry name" value="N-utilization substance G protein NusG, N-terminal domain"/>
    <property type="match status" value="1"/>
</dbReference>
<dbReference type="SUPFAM" id="SSF50104">
    <property type="entry name" value="Translation proteins SH3-like domain"/>
    <property type="match status" value="1"/>
</dbReference>
<dbReference type="PROSITE" id="PS01014">
    <property type="entry name" value="NUSG"/>
    <property type="match status" value="1"/>
</dbReference>
<reference key="1">
    <citation type="journal article" date="1990" name="J. Bacteriol.">
        <title>Sequence and transcriptional pattern of the essential Escherichia coli secE-nusG operon.</title>
        <authorList>
            <person name="Downing W.L."/>
            <person name="Sullivan S.L."/>
            <person name="Gottesman M.E."/>
            <person name="Dennis P.P."/>
        </authorList>
    </citation>
    <scope>NUCLEOTIDE SEQUENCE [GENOMIC DNA]</scope>
</reference>
<reference key="2">
    <citation type="journal article" date="1993" name="Nucleic Acids Res.">
        <title>Analysis of the Escherichia coli genome. IV. DNA sequence of the region from 89.2 to 92.8 minutes.</title>
        <authorList>
            <person name="Blattner F.R."/>
            <person name="Burland V.D."/>
            <person name="Plunkett G. III"/>
            <person name="Sofia H.J."/>
            <person name="Daniels D.L."/>
        </authorList>
    </citation>
    <scope>NUCLEOTIDE SEQUENCE [LARGE SCALE GENOMIC DNA]</scope>
    <source>
        <strain>K12 / MG1655 / ATCC 47076</strain>
    </source>
</reference>
<reference key="3">
    <citation type="journal article" date="1997" name="Science">
        <title>The complete genome sequence of Escherichia coli K-12.</title>
        <authorList>
            <person name="Blattner F.R."/>
            <person name="Plunkett G. III"/>
            <person name="Bloch C.A."/>
            <person name="Perna N.T."/>
            <person name="Burland V."/>
            <person name="Riley M."/>
            <person name="Collado-Vides J."/>
            <person name="Glasner J.D."/>
            <person name="Rode C.K."/>
            <person name="Mayhew G.F."/>
            <person name="Gregor J."/>
            <person name="Davis N.W."/>
            <person name="Kirkpatrick H.A."/>
            <person name="Goeden M.A."/>
            <person name="Rose D.J."/>
            <person name="Mau B."/>
            <person name="Shao Y."/>
        </authorList>
    </citation>
    <scope>NUCLEOTIDE SEQUENCE [LARGE SCALE GENOMIC DNA]</scope>
    <source>
        <strain>K12 / MG1655 / ATCC 47076</strain>
    </source>
</reference>
<reference key="4">
    <citation type="journal article" date="2006" name="Mol. Syst. Biol.">
        <title>Highly accurate genome sequences of Escherichia coli K-12 strains MG1655 and W3110.</title>
        <authorList>
            <person name="Hayashi K."/>
            <person name="Morooka N."/>
            <person name="Yamamoto Y."/>
            <person name="Fujita K."/>
            <person name="Isono K."/>
            <person name="Choi S."/>
            <person name="Ohtsubo E."/>
            <person name="Baba T."/>
            <person name="Wanner B.L."/>
            <person name="Mori H."/>
            <person name="Horiuchi T."/>
        </authorList>
    </citation>
    <scope>NUCLEOTIDE SEQUENCE [LARGE SCALE GENOMIC DNA]</scope>
    <source>
        <strain>K12 / W3110 / ATCC 27325 / DSM 5911</strain>
    </source>
</reference>
<reference key="5">
    <citation type="journal article" date="1998" name="J. Mol. Biol.">
        <title>Protein identification with N and C-terminal sequence tags in proteome projects.</title>
        <authorList>
            <person name="Wilkins M.R."/>
            <person name="Gasteiger E."/>
            <person name="Tonella L."/>
            <person name="Ou K."/>
            <person name="Tyler M."/>
            <person name="Sanchez J.-C."/>
            <person name="Gooley A.A."/>
            <person name="Walsh B.J."/>
            <person name="Bairoch A."/>
            <person name="Appel R.D."/>
            <person name="Williams K.L."/>
            <person name="Hochstrasser D.F."/>
        </authorList>
    </citation>
    <scope>PROTEIN SEQUENCE OF 2-5</scope>
    <source>
        <strain>K12 / W3110 / ATCC 27325 / DSM 5911</strain>
    </source>
</reference>
<reference key="6">
    <citation type="journal article" date="1992" name="J. Biol. Chem.">
        <title>NusG, a new Escherichia coli elongation factor involved in transcriptional antitermination by the N protein of phage lambda.</title>
        <authorList>
            <person name="Li J."/>
            <person name="Horwitz R."/>
            <person name="McCracken S."/>
            <person name="Greenblatt J."/>
        </authorList>
    </citation>
    <scope>PROTEIN SEQUENCE OF 3-12</scope>
    <scope>FUNCTION</scope>
    <scope>INTERACTION WITH RNA POLYMERASE AND RHO FACTOR</scope>
</reference>
<reference key="7">
    <citation type="journal article" date="1992" name="Cell">
        <title>Requirement for E. coli NusG protein in factor-dependent transcription termination.</title>
        <authorList>
            <person name="Sullivan S.L."/>
            <person name="Gottesman M.E."/>
        </authorList>
    </citation>
    <scope>FUNCTION</scope>
</reference>
<reference key="8">
    <citation type="journal article" date="1993" name="Gene Expr.">
        <title>NusG alters rho-dependent termination of transcription in vitro independent of kinetic coupling.</title>
        <authorList>
            <person name="Nehrke K.W."/>
            <person name="Zalatan F."/>
            <person name="Platt T."/>
        </authorList>
    </citation>
    <scope>FUNCTION</scope>
</reference>
<reference key="9">
    <citation type="journal article" date="1993" name="Genes Dev.">
        <title>Elongation factor NusG interacts with termination factor rho to regulate termination and antitermination of transcription.</title>
        <authorList>
            <person name="Li J."/>
            <person name="Mason S.W."/>
            <person name="Greenblatt J."/>
        </authorList>
    </citation>
    <scope>FUNCTION</scope>
    <scope>INTERACTION WITH RHO FACTOR</scope>
</reference>
<reference key="10">
    <citation type="journal article" date="1995" name="J. Bacteriol.">
        <title>Escherichia coli NusG protein stimulates transcription elongation rates in vivo and in vitro.</title>
        <authorList>
            <person name="Burova E."/>
            <person name="Hung S.C."/>
            <person name="Sagitov V."/>
            <person name="Stitt B.L."/>
            <person name="Gottesman M.E."/>
        </authorList>
    </citation>
    <scope>FUNCTION</scope>
</reference>
<reference key="11">
    <citation type="journal article" date="1995" name="Proc. Natl. Acad. Sci. U.S.A.">
        <title>NusG is required to overcome a kinetic limitation to Rho function at an intragenic terminator.</title>
        <authorList>
            <person name="Burns C.M."/>
            <person name="Richardson J.P."/>
        </authorList>
    </citation>
    <scope>FUNCTION</scope>
</reference>
<reference key="12">
    <citation type="journal article" date="1999" name="Mol. Microbiol.">
        <title>Antiterminator-dependent modulation of transcription elongation rates by NusB and NusG.</title>
        <authorList>
            <person name="Zellars M."/>
            <person name="Squires C.L."/>
        </authorList>
    </citation>
    <scope>FUNCTION</scope>
</reference>
<reference key="13">
    <citation type="journal article" date="2000" name="Biochemistry">
        <title>Regulation of rho-dependent transcription termination by NusG is specific to the Escherichia coli elongation complex.</title>
        <authorList>
            <person name="Pasman Z."/>
            <person name="von Hippel P.H."/>
        </authorList>
    </citation>
    <scope>FUNCTION</scope>
    <scope>SUBUNIT</scope>
    <scope>INTERACTION WITH RHO</scope>
</reference>
<reference key="14">
    <citation type="journal article" date="2004" name="J. Bacteriol.">
        <title>In vivo effect of NusB and NusG on rRNA transcription antitermination.</title>
        <authorList>
            <person name="Torres M."/>
            <person name="Balada J.M."/>
            <person name="Zellars M."/>
            <person name="Squires C."/>
            <person name="Squires C.L."/>
        </authorList>
    </citation>
    <scope>FUNCTION IN RRNA TRANSCRIPTION ANTITERMINATION</scope>
    <source>
        <strain>K12 / MC4100 / ATCC 35695 / DSM 6574</strain>
    </source>
</reference>
<reference key="15">
    <citation type="journal article" date="2010" name="Science">
        <title>A NusE:NusG complex links transcription and translation.</title>
        <authorList>
            <person name="Burmann B.M."/>
            <person name="Schweimer K."/>
            <person name="Luo X."/>
            <person name="Wahl M.C."/>
            <person name="Stitt B.L."/>
            <person name="Gottesman M.E."/>
            <person name="Rosch P."/>
        </authorList>
    </citation>
    <scope>STRUCTURE BY NMR OF 123-181</scope>
    <scope>INTERACTION WITH RPSJ</scope>
    <scope>DOMAIN</scope>
</reference>
<reference evidence="14 15" key="16">
    <citation type="journal article" date="2020" name="Mol. Cell">
        <title>Structure-Based Mechanisms of a Molecular RNA Polymerase/Chaperone Machine Required for Ribosome Biosynthesis.</title>
        <authorList>
            <person name="Huang Y.H."/>
            <person name="Hilal T."/>
            <person name="Loll B."/>
            <person name="Buerger J."/>
            <person name="Mielke T."/>
            <person name="Boettcher C."/>
            <person name="Said N."/>
            <person name="Wahl M.C."/>
        </authorList>
    </citation>
    <scope>STRUCTURE BY ELECTRON MICROSCOPY (3.80 ANGSTROMS) OF RRNA TRANSCRIPTION-ELONGATION-ANTITERMINATION COMPLEXES WITH AND WITHOUT S4</scope>
    <scope>FUNCTION</scope>
    <scope>SUBUNIT</scope>
</reference>